<keyword id="KW-0025">Alternative splicing</keyword>
<keyword id="KW-0106">Calcium</keyword>
<keyword id="KW-0333">Golgi apparatus</keyword>
<keyword id="KW-0378">Hydrolase</keyword>
<keyword id="KW-0449">Lipoprotein</keyword>
<keyword id="KW-0472">Membrane</keyword>
<keyword id="KW-0479">Metal-binding</keyword>
<keyword id="KW-0488">Methylation</keyword>
<keyword id="KW-0597">Phosphoprotein</keyword>
<keyword id="KW-0636">Prenylation</keyword>
<keyword id="KW-0645">Protease</keyword>
<keyword id="KW-1267">Proteomics identification</keyword>
<keyword id="KW-1185">Reference proteome</keyword>
<keyword id="KW-0677">Repeat</keyword>
<keyword id="KW-0788">Thiol protease</keyword>
<keyword id="KW-0833">Ubl conjugation pathway</keyword>
<gene>
    <name type="primary">USP32</name>
    <name type="synonym">USP10</name>
</gene>
<accession>Q8NFA0</accession>
<accession>Q7Z5T3</accession>
<accession>Q9BX85</accession>
<accession>Q9Y591</accession>
<sequence length="1604" mass="181656">MGAKESRIGFLSYEEALRRVTDVELKRLKDAFKRTCGLSYYMGQHCFIREVLGDGVPPKVAEVIYCSFGGTSKGLHFNNLIVGLVLLTRGKDEEKAKYIFSLFSSESGNYVIREEMERMLHVVDGKVPDTLRKCFSEGEKVNYEKFRNWLFLNKDAFTFSRWLLSGGVYVTLTDDSDTPTFYQTLAGVTHLEESDIIDLEKRYWLLKAQSRTGRFDLETFGPLVSPPIRPSLSEGLFNAFDENRDNHIDFKEISCGLSACCRGPLAERQKFCFKVFDVDRDGVLSRVELRDMVVALLEVWKDNRTDDIPELHMDLSDIVEGILNAHDTTKMGHLTLEDYQIWSVKNVLANEFLNLLFQVCHIVLGLRPATPEEEGQIIRGWLERESRYGLQAGHNWFIISMQWWQQWKEYVKYDANPVVIEPSSVLNGGKYSFGTAAHPMEQVEDRIGSSLSYVNTTEEKFSDNISTASEASETAGSGFLYSATPGADVCFARQHNTSDNNNQCLLGANGNILLHLNPQKPGAIDNQPLVTQEPVKATSLTLEGGRLKRTPQLIHGRDYEMVPEPVWRALYHWYGANLALPRPVIKNSKTDIPELELFPRYLLFLRQQPATRTQQSNIWVNMGNVPSPNAPLKRVLAYTGCFSRMQTIKEIHEYLSQRLRIKEEDMRLWLYNSENYLTLLDDEDHKLEYLKIQDEQHLVIEVRNKDMSWPEEMSFIANSSKIDRHKVPTEKGATGLSNLGNTCFMNSSIQCVSNTQPLTQYFISGRHLYELNRTNPIGMKGHMAKCYGDLVQELWSGTQKNVAPLKLRWTIAKYAPRFNGFQQQDSQELLAFLLDGLHEDLNRVHEKPYVELKDSDGRPDWEVAAEAWDNHLRRNRSIVVDLFHGQLRSQVKCKTCGHISVRFDPFNFLSLPLPMDSYMHLEITVIKLDGTTPVRYGLRLNMDEKYTGLKKQLSDLCGLNSEQILLAEVHGSNIKNFPQDNQKVRLSVSGFLCAFEIPVPVSPISASSPTQTDFSSSPSTNEMFTLTTNGDLPRPIFIPNGMPNTVVPCGTEKNFTNGMVNGHMPSLPDSPFTGYIIAVHRKMMRTELYFLSSQKNRPSLFGMPLIVPCTVHTRKKDLYDAVWIQVSRLASPLPPQEASNHAQDCDDSMGYQYPFTLRVVQKDGNSCAWCPWYRFCRGCKIDCGEDRAFIGNAYIAVDWDPTALHLRYQTSQERVVDEHESVEQSRRAQAEPINLDSCLRAFTSEEELGENEMYYCSKCKTHCLATKKLDLWRLPPILIIHLKRFQFVNGRWIKSQKIVKFPRESFDPSAFLVPRDPALCQHKPLTPQGDELSEPRILAREVKKVDAQSSAGEEDVLLSKSPSSLSANIISSPKGSPSSSRKSGTSCPSSKNSSPNSSPRTLGRSKGRLRLPQIGSKNKLSSSKENLDASKENGAGQICELADALSRGHVLGGSQPELVTPQDHEVALANGFLYEHEACGNGYSNGQLGNHSEEDSTDDQREDTRIKPIYNLYAISCHSGILGGGHYVTYAKNPNCKWYCYNDSSCKELHPDEIDTDSAYILFYEQQGIDYAQFLPKTDGKKMADTSSMDEDFESDYKKYCVLQ</sequence>
<comment type="function">
    <text evidence="8">Deubiquitinase that can remove conjugated ubiquitin from target proteins, such as RAB7A and LAMTOR1 (PubMed:36476874). Acts as a positive regulator of the mTORC1 signaling by mediating deubiquitination of LAMTOR1, thereby promoting the association between LAMTOR1 and the lysosomal V-ATPase complex and subsequent activation of the mTORC1 complex (PubMed:36476874).</text>
</comment>
<comment type="catalytic activity">
    <reaction evidence="7 8">
        <text>Thiol-dependent hydrolysis of ester, thioester, amide, peptide and isopeptide bonds formed by the C-terminal Gly of ubiquitin (a 76-residue protein attached to proteins as an intracellular targeting signal).</text>
        <dbReference type="EC" id="3.4.19.12"/>
    </reaction>
</comment>
<comment type="interaction">
    <interactant intactId="EBI-2511075">
        <id>Q8NFA0</id>
    </interactant>
    <interactant intactId="EBI-744871">
        <id>O00746</id>
        <label>NME4</label>
    </interactant>
    <organismsDiffer>false</organismsDiffer>
    <experiments>2</experiments>
</comment>
<comment type="interaction">
    <interactant intactId="EBI-2511075">
        <id>Q8NFA0</id>
    </interactant>
    <interactant intactId="EBI-524753">
        <id>Q8IUH5</id>
        <label>ZDHHC17</label>
    </interactant>
    <organismsDiffer>false</organismsDiffer>
    <experiments>2</experiments>
</comment>
<comment type="interaction">
    <interactant intactId="EBI-12220239">
        <id>Q8NFA0-2</id>
    </interactant>
    <interactant intactId="EBI-17439331">
        <id>Q8N6D5</id>
        <label>ANKRD29</label>
    </interactant>
    <organismsDiffer>false</organismsDiffer>
    <experiments>3</experiments>
</comment>
<comment type="interaction">
    <interactant intactId="EBI-12220239">
        <id>Q8NFA0-2</id>
    </interactant>
    <interactant intactId="EBI-466029">
        <id>P42858</id>
        <label>HTT</label>
    </interactant>
    <organismsDiffer>false</organismsDiffer>
    <experiments>18</experiments>
</comment>
<comment type="interaction">
    <interactant intactId="EBI-12220239">
        <id>Q8NFA0-2</id>
    </interactant>
    <interactant intactId="EBI-16439278">
        <id>Q6FHY5</id>
        <label>MEOX2</label>
    </interactant>
    <organismsDiffer>false</organismsDiffer>
    <experiments>3</experiments>
</comment>
<comment type="interaction">
    <interactant intactId="EBI-12220239">
        <id>Q8NFA0-2</id>
    </interactant>
    <interactant intactId="EBI-713635">
        <id>O43639</id>
        <label>NCK2</label>
    </interactant>
    <organismsDiffer>false</organismsDiffer>
    <experiments>5</experiments>
</comment>
<comment type="interaction">
    <interactant intactId="EBI-12220239">
        <id>Q8NFA0-2</id>
    </interactant>
    <interactant intactId="EBI-2129889">
        <id>O75382</id>
        <label>TRIM3</label>
    </interactant>
    <organismsDiffer>false</organismsDiffer>
    <experiments>3</experiments>
</comment>
<comment type="subcellular location">
    <subcellularLocation>
        <location evidence="7">Golgi apparatus membrane</location>
        <topology evidence="10">Lipid-anchor</topology>
    </subcellularLocation>
</comment>
<comment type="alternative products">
    <event type="alternative splicing"/>
    <isoform>
        <id>Q8NFA0-1</id>
        <name>1</name>
        <sequence type="displayed"/>
    </isoform>
    <isoform>
        <id>Q8NFA0-2</id>
        <name>2</name>
        <sequence type="described" ref="VSP_056307 VSP_056308"/>
    </isoform>
</comment>
<comment type="similarity">
    <text evidence="10">Belongs to the peptidase C19 family.</text>
</comment>
<dbReference type="EC" id="3.4.19.12" evidence="7 8"/>
<dbReference type="EMBL" id="AF533230">
    <property type="protein sequence ID" value="AAM97922.1"/>
    <property type="molecule type" value="mRNA"/>
</dbReference>
<dbReference type="EMBL" id="AF350251">
    <property type="protein sequence ID" value="AAK30207.1"/>
    <property type="molecule type" value="mRNA"/>
</dbReference>
<dbReference type="EMBL" id="AC003962">
    <property type="status" value="NOT_ANNOTATED_CDS"/>
    <property type="molecule type" value="Genomic_DNA"/>
</dbReference>
<dbReference type="EMBL" id="AC025048">
    <property type="status" value="NOT_ANNOTATED_CDS"/>
    <property type="molecule type" value="Genomic_DNA"/>
</dbReference>
<dbReference type="EMBL" id="AC037475">
    <property type="status" value="NOT_ANNOTATED_CDS"/>
    <property type="molecule type" value="Genomic_DNA"/>
</dbReference>
<dbReference type="EMBL" id="AC104763">
    <property type="status" value="NOT_ANNOTATED_CDS"/>
    <property type="molecule type" value="Genomic_DNA"/>
</dbReference>
<dbReference type="EMBL" id="BC054344">
    <property type="protein sequence ID" value="AAH54344.1"/>
    <property type="molecule type" value="mRNA"/>
</dbReference>
<dbReference type="EMBL" id="AF155116">
    <property type="protein sequence ID" value="AAD42882.1"/>
    <property type="molecule type" value="mRNA"/>
</dbReference>
<dbReference type="CCDS" id="CCDS32697.1">
    <molecule id="Q8NFA0-1"/>
</dbReference>
<dbReference type="RefSeq" id="NP_115971.2">
    <molecule id="Q8NFA0-1"/>
    <property type="nucleotide sequence ID" value="NM_032582.3"/>
</dbReference>
<dbReference type="SMR" id="Q8NFA0"/>
<dbReference type="BioGRID" id="124189">
    <property type="interactions" value="135"/>
</dbReference>
<dbReference type="DIP" id="DIP-53613N"/>
<dbReference type="FunCoup" id="Q8NFA0">
    <property type="interactions" value="2718"/>
</dbReference>
<dbReference type="IntAct" id="Q8NFA0">
    <property type="interactions" value="89"/>
</dbReference>
<dbReference type="MINT" id="Q8NFA0"/>
<dbReference type="STRING" id="9606.ENSP00000300896"/>
<dbReference type="MEROPS" id="C19.044"/>
<dbReference type="MEROPS" id="C19.107"/>
<dbReference type="GlyGen" id="Q8NFA0">
    <property type="glycosylation" value="1 site"/>
</dbReference>
<dbReference type="iPTMnet" id="Q8NFA0"/>
<dbReference type="PhosphoSitePlus" id="Q8NFA0"/>
<dbReference type="SwissPalm" id="Q8NFA0"/>
<dbReference type="BioMuta" id="USP32"/>
<dbReference type="DMDM" id="47606649"/>
<dbReference type="jPOST" id="Q8NFA0"/>
<dbReference type="MassIVE" id="Q8NFA0"/>
<dbReference type="PaxDb" id="9606-ENSP00000300896"/>
<dbReference type="PeptideAtlas" id="Q8NFA0"/>
<dbReference type="ProteomicsDB" id="69353"/>
<dbReference type="ProteomicsDB" id="73280">
    <molecule id="Q8NFA0-1"/>
</dbReference>
<dbReference type="Pumba" id="Q8NFA0"/>
<dbReference type="Antibodypedia" id="31170">
    <property type="antibodies" value="77 antibodies from 24 providers"/>
</dbReference>
<dbReference type="DNASU" id="84669"/>
<dbReference type="Ensembl" id="ENST00000300896.9">
    <molecule id="Q8NFA0-1"/>
    <property type="protein sequence ID" value="ENSP00000300896.3"/>
    <property type="gene ID" value="ENSG00000170832.13"/>
</dbReference>
<dbReference type="Ensembl" id="ENST00000393003.7">
    <molecule id="Q8NFA0-2"/>
    <property type="protein sequence ID" value="ENSP00000376727.2"/>
    <property type="gene ID" value="ENSG00000170832.13"/>
</dbReference>
<dbReference type="GeneID" id="84669"/>
<dbReference type="KEGG" id="hsa:84669"/>
<dbReference type="MANE-Select" id="ENST00000300896.9">
    <property type="protein sequence ID" value="ENSP00000300896.3"/>
    <property type="RefSeq nucleotide sequence ID" value="NM_032582.4"/>
    <property type="RefSeq protein sequence ID" value="NP_115971.2"/>
</dbReference>
<dbReference type="UCSC" id="uc002iyo.2">
    <molecule id="Q8NFA0-1"/>
    <property type="organism name" value="human"/>
</dbReference>
<dbReference type="AGR" id="HGNC:19143"/>
<dbReference type="CTD" id="84669"/>
<dbReference type="DisGeNET" id="84669"/>
<dbReference type="GeneCards" id="USP32"/>
<dbReference type="HGNC" id="HGNC:19143">
    <property type="gene designation" value="USP32"/>
</dbReference>
<dbReference type="HPA" id="ENSG00000170832">
    <property type="expression patterns" value="Tissue enhanced (testis)"/>
</dbReference>
<dbReference type="MIM" id="607740">
    <property type="type" value="gene"/>
</dbReference>
<dbReference type="neXtProt" id="NX_Q8NFA0"/>
<dbReference type="OpenTargets" id="ENSG00000170832"/>
<dbReference type="PharmGKB" id="PA134982542"/>
<dbReference type="VEuPathDB" id="HostDB:ENSG00000170832"/>
<dbReference type="eggNOG" id="KOG0044">
    <property type="taxonomic scope" value="Eukaryota"/>
</dbReference>
<dbReference type="eggNOG" id="KOG1870">
    <property type="taxonomic scope" value="Eukaryota"/>
</dbReference>
<dbReference type="GeneTree" id="ENSGT00940000155797"/>
<dbReference type="HOGENOM" id="CLU_061823_0_0_1"/>
<dbReference type="InParanoid" id="Q8NFA0"/>
<dbReference type="OMA" id="FKADNRR"/>
<dbReference type="OrthoDB" id="265776at2759"/>
<dbReference type="PAN-GO" id="Q8NFA0">
    <property type="GO annotations" value="2 GO annotations based on evolutionary models"/>
</dbReference>
<dbReference type="PhylomeDB" id="Q8NFA0"/>
<dbReference type="TreeFam" id="TF324190"/>
<dbReference type="PathwayCommons" id="Q8NFA0"/>
<dbReference type="SignaLink" id="Q8NFA0"/>
<dbReference type="BioGRID-ORCS" id="84669">
    <property type="hits" value="40 hits in 1201 CRISPR screens"/>
</dbReference>
<dbReference type="ChiTaRS" id="USP32">
    <property type="organism name" value="human"/>
</dbReference>
<dbReference type="GenomeRNAi" id="84669"/>
<dbReference type="Pharos" id="Q8NFA0">
    <property type="development level" value="Tbio"/>
</dbReference>
<dbReference type="PRO" id="PR:Q8NFA0"/>
<dbReference type="Proteomes" id="UP000005640">
    <property type="component" value="Chromosome 17"/>
</dbReference>
<dbReference type="RNAct" id="Q8NFA0">
    <property type="molecule type" value="protein"/>
</dbReference>
<dbReference type="Bgee" id="ENSG00000170832">
    <property type="expression patterns" value="Expressed in left testis and 195 other cell types or tissues"/>
</dbReference>
<dbReference type="ExpressionAtlas" id="Q8NFA0">
    <property type="expression patterns" value="baseline and differential"/>
</dbReference>
<dbReference type="GO" id="GO:0005829">
    <property type="term" value="C:cytosol"/>
    <property type="evidence" value="ECO:0000314"/>
    <property type="project" value="HPA"/>
</dbReference>
<dbReference type="GO" id="GO:0005794">
    <property type="term" value="C:Golgi apparatus"/>
    <property type="evidence" value="ECO:0000314"/>
    <property type="project" value="HPA"/>
</dbReference>
<dbReference type="GO" id="GO:0000139">
    <property type="term" value="C:Golgi membrane"/>
    <property type="evidence" value="ECO:0007669"/>
    <property type="project" value="UniProtKB-SubCell"/>
</dbReference>
<dbReference type="GO" id="GO:0005509">
    <property type="term" value="F:calcium ion binding"/>
    <property type="evidence" value="ECO:0007669"/>
    <property type="project" value="InterPro"/>
</dbReference>
<dbReference type="GO" id="GO:0004843">
    <property type="term" value="F:cysteine-type deubiquitinase activity"/>
    <property type="evidence" value="ECO:0000314"/>
    <property type="project" value="UniProtKB"/>
</dbReference>
<dbReference type="GO" id="GO:1904263">
    <property type="term" value="P:positive regulation of TORC1 signaling"/>
    <property type="evidence" value="ECO:0000315"/>
    <property type="project" value="UniProtKB"/>
</dbReference>
<dbReference type="GO" id="GO:0016579">
    <property type="term" value="P:protein deubiquitination"/>
    <property type="evidence" value="ECO:0000304"/>
    <property type="project" value="UniProtKB"/>
</dbReference>
<dbReference type="GO" id="GO:0006508">
    <property type="term" value="P:proteolysis"/>
    <property type="evidence" value="ECO:0007669"/>
    <property type="project" value="UniProtKB-KW"/>
</dbReference>
<dbReference type="CDD" id="cd00051">
    <property type="entry name" value="EFh"/>
    <property type="match status" value="1"/>
</dbReference>
<dbReference type="FunFam" id="1.10.238.10:FF:000081">
    <property type="entry name" value="Ubiquitin carboxyl-terminal hydrolase 32"/>
    <property type="match status" value="1"/>
</dbReference>
<dbReference type="FunFam" id="1.10.238.10:FF:000128">
    <property type="entry name" value="Ubiquitin carboxyl-terminal hydrolase 32"/>
    <property type="match status" value="1"/>
</dbReference>
<dbReference type="FunFam" id="3.10.20.90:FF:000068">
    <property type="entry name" value="Ubiquitin carboxyl-terminal hydrolase 32"/>
    <property type="match status" value="1"/>
</dbReference>
<dbReference type="FunFam" id="3.30.2230.10:FF:000004">
    <property type="entry name" value="Ubiquitin carboxyl-terminal hydrolase 32"/>
    <property type="match status" value="1"/>
</dbReference>
<dbReference type="FunFam" id="3.90.70.10:FF:000018">
    <property type="entry name" value="Ubiquitin carboxyl-terminal hydrolase 32"/>
    <property type="match status" value="1"/>
</dbReference>
<dbReference type="FunFam" id="3.90.70.10:FF:000065">
    <property type="entry name" value="Ubiquitin carboxyl-terminal hydrolase 32"/>
    <property type="match status" value="1"/>
</dbReference>
<dbReference type="FunFam" id="3.90.70.10:FF:000076">
    <property type="entry name" value="Ubiquitin carboxyl-terminal hydrolase 32"/>
    <property type="match status" value="1"/>
</dbReference>
<dbReference type="Gene3D" id="3.90.70.10">
    <property type="entry name" value="Cysteine proteinases"/>
    <property type="match status" value="3"/>
</dbReference>
<dbReference type="Gene3D" id="3.30.2230.10">
    <property type="entry name" value="DUSP-like"/>
    <property type="match status" value="1"/>
</dbReference>
<dbReference type="Gene3D" id="1.10.238.10">
    <property type="entry name" value="EF-hand"/>
    <property type="match status" value="2"/>
</dbReference>
<dbReference type="Gene3D" id="3.10.20.90">
    <property type="entry name" value="Phosphatidylinositol 3-kinase Catalytic Subunit, Chain A, domain 1"/>
    <property type="match status" value="1"/>
</dbReference>
<dbReference type="InterPro" id="IPR035927">
    <property type="entry name" value="DUSP-like_sf"/>
</dbReference>
<dbReference type="InterPro" id="IPR011992">
    <property type="entry name" value="EF-hand-dom_pair"/>
</dbReference>
<dbReference type="InterPro" id="IPR018247">
    <property type="entry name" value="EF_Hand_1_Ca_BS"/>
</dbReference>
<dbReference type="InterPro" id="IPR002048">
    <property type="entry name" value="EF_hand_dom"/>
</dbReference>
<dbReference type="InterPro" id="IPR038765">
    <property type="entry name" value="Papain-like_cys_pep_sf"/>
</dbReference>
<dbReference type="InterPro" id="IPR006615">
    <property type="entry name" value="Pept_C19_DUSP"/>
</dbReference>
<dbReference type="InterPro" id="IPR001394">
    <property type="entry name" value="Peptidase_C19_UCH"/>
</dbReference>
<dbReference type="InterPro" id="IPR050185">
    <property type="entry name" value="Ub_carboxyl-term_hydrolase"/>
</dbReference>
<dbReference type="InterPro" id="IPR028135">
    <property type="entry name" value="Ub_USP-typ"/>
</dbReference>
<dbReference type="InterPro" id="IPR018200">
    <property type="entry name" value="USP_CS"/>
</dbReference>
<dbReference type="InterPro" id="IPR028889">
    <property type="entry name" value="USP_dom"/>
</dbReference>
<dbReference type="PANTHER" id="PTHR21646">
    <property type="entry name" value="UBIQUITIN CARBOXYL-TERMINAL HYDROLASE"/>
    <property type="match status" value="1"/>
</dbReference>
<dbReference type="PANTHER" id="PTHR21646:SF76">
    <property type="entry name" value="UBIQUITIN CARBOXYL-TERMINAL HYDROLASE 32"/>
    <property type="match status" value="1"/>
</dbReference>
<dbReference type="Pfam" id="PF06337">
    <property type="entry name" value="DUSP"/>
    <property type="match status" value="1"/>
</dbReference>
<dbReference type="Pfam" id="PF13202">
    <property type="entry name" value="EF-hand_5"/>
    <property type="match status" value="2"/>
</dbReference>
<dbReference type="Pfam" id="PF14836">
    <property type="entry name" value="Ubiquitin_3"/>
    <property type="match status" value="1"/>
</dbReference>
<dbReference type="Pfam" id="PF00443">
    <property type="entry name" value="UCH"/>
    <property type="match status" value="1"/>
</dbReference>
<dbReference type="Pfam" id="PF25265">
    <property type="entry name" value="USP32_N"/>
    <property type="match status" value="1"/>
</dbReference>
<dbReference type="PRINTS" id="PR00450">
    <property type="entry name" value="RECOVERIN"/>
</dbReference>
<dbReference type="SMART" id="SM00695">
    <property type="entry name" value="DUSP"/>
    <property type="match status" value="1"/>
</dbReference>
<dbReference type="SMART" id="SM00054">
    <property type="entry name" value="EFh"/>
    <property type="match status" value="2"/>
</dbReference>
<dbReference type="SUPFAM" id="SSF54001">
    <property type="entry name" value="Cysteine proteinases"/>
    <property type="match status" value="1"/>
</dbReference>
<dbReference type="SUPFAM" id="SSF143791">
    <property type="entry name" value="DUSP-like"/>
    <property type="match status" value="1"/>
</dbReference>
<dbReference type="SUPFAM" id="SSF47473">
    <property type="entry name" value="EF-hand"/>
    <property type="match status" value="2"/>
</dbReference>
<dbReference type="PROSITE" id="PS51283">
    <property type="entry name" value="DUSP"/>
    <property type="match status" value="1"/>
</dbReference>
<dbReference type="PROSITE" id="PS00018">
    <property type="entry name" value="EF_HAND_1"/>
    <property type="match status" value="2"/>
</dbReference>
<dbReference type="PROSITE" id="PS50222">
    <property type="entry name" value="EF_HAND_2"/>
    <property type="match status" value="3"/>
</dbReference>
<dbReference type="PROSITE" id="PS00972">
    <property type="entry name" value="USP_1"/>
    <property type="match status" value="1"/>
</dbReference>
<dbReference type="PROSITE" id="PS00973">
    <property type="entry name" value="USP_2"/>
    <property type="match status" value="1"/>
</dbReference>
<dbReference type="PROSITE" id="PS50235">
    <property type="entry name" value="USP_3"/>
    <property type="match status" value="1"/>
</dbReference>
<name>UBP32_HUMAN</name>
<protein>
    <recommendedName>
        <fullName>Ubiquitin carboxyl-terminal hydrolase 32</fullName>
        <ecNumber evidence="7 8">3.4.19.12</ecNumber>
    </recommendedName>
    <alternativeName>
        <fullName>Deubiquitinating enzyme 32</fullName>
    </alternativeName>
    <alternativeName>
        <fullName>Renal carcinoma antigen NY-REN-60</fullName>
    </alternativeName>
    <alternativeName>
        <fullName>Ubiquitin thioesterase 32</fullName>
    </alternativeName>
    <alternativeName>
        <fullName>Ubiquitin-specific-processing protease 32</fullName>
    </alternativeName>
</protein>
<proteinExistence type="evidence at protein level"/>
<reference key="1">
    <citation type="journal article" date="2003" name="Proc. Natl. Acad. Sci. U.S.A.">
        <title>The Tre2 (USP6) oncogene is a hominoid-specific gene.</title>
        <authorList>
            <person name="Paulding C.A."/>
            <person name="Ruvolo M."/>
            <person name="Haber D.A."/>
        </authorList>
    </citation>
    <scope>NUCLEOTIDE SEQUENCE [MRNA] (ISOFORM 1)</scope>
    <source>
        <tissue>Brain</tissue>
    </source>
</reference>
<reference key="2">
    <citation type="submission" date="2001-02" db="EMBL/GenBank/DDBJ databases">
        <title>Identification of a novel ubiquitin specific protease gene related to testes development from human testes cDNA library.</title>
        <authorList>
            <person name="Sha J.H."/>
        </authorList>
    </citation>
    <scope>NUCLEOTIDE SEQUENCE [MRNA] OF 331-1604 (ISOFORM 1)</scope>
    <source>
        <tissue>Testis</tissue>
    </source>
</reference>
<reference key="3">
    <citation type="journal article" date="2006" name="Nature">
        <title>DNA sequence of human chromosome 17 and analysis of rearrangement in the human lineage.</title>
        <authorList>
            <person name="Zody M.C."/>
            <person name="Garber M."/>
            <person name="Adams D.J."/>
            <person name="Sharpe T."/>
            <person name="Harrow J."/>
            <person name="Lupski J.R."/>
            <person name="Nicholson C."/>
            <person name="Searle S.M."/>
            <person name="Wilming L."/>
            <person name="Young S.K."/>
            <person name="Abouelleil A."/>
            <person name="Allen N.R."/>
            <person name="Bi W."/>
            <person name="Bloom T."/>
            <person name="Borowsky M.L."/>
            <person name="Bugalter B.E."/>
            <person name="Butler J."/>
            <person name="Chang J.L."/>
            <person name="Chen C.-K."/>
            <person name="Cook A."/>
            <person name="Corum B."/>
            <person name="Cuomo C.A."/>
            <person name="de Jong P.J."/>
            <person name="DeCaprio D."/>
            <person name="Dewar K."/>
            <person name="FitzGerald M."/>
            <person name="Gilbert J."/>
            <person name="Gibson R."/>
            <person name="Gnerre S."/>
            <person name="Goldstein S."/>
            <person name="Grafham D.V."/>
            <person name="Grocock R."/>
            <person name="Hafez N."/>
            <person name="Hagopian D.S."/>
            <person name="Hart E."/>
            <person name="Norman C.H."/>
            <person name="Humphray S."/>
            <person name="Jaffe D.B."/>
            <person name="Jones M."/>
            <person name="Kamal M."/>
            <person name="Khodiyar V.K."/>
            <person name="LaButti K."/>
            <person name="Laird G."/>
            <person name="Lehoczky J."/>
            <person name="Liu X."/>
            <person name="Lokyitsang T."/>
            <person name="Loveland J."/>
            <person name="Lui A."/>
            <person name="Macdonald P."/>
            <person name="Major J.E."/>
            <person name="Matthews L."/>
            <person name="Mauceli E."/>
            <person name="McCarroll S.A."/>
            <person name="Mihalev A.H."/>
            <person name="Mudge J."/>
            <person name="Nguyen C."/>
            <person name="Nicol R."/>
            <person name="O'Leary S.B."/>
            <person name="Osoegawa K."/>
            <person name="Schwartz D.C."/>
            <person name="Shaw-Smith C."/>
            <person name="Stankiewicz P."/>
            <person name="Steward C."/>
            <person name="Swarbreck D."/>
            <person name="Venkataraman V."/>
            <person name="Whittaker C.A."/>
            <person name="Yang X."/>
            <person name="Zimmer A.R."/>
            <person name="Bradley A."/>
            <person name="Hubbard T."/>
            <person name="Birren B.W."/>
            <person name="Rogers J."/>
            <person name="Lander E.S."/>
            <person name="Nusbaum C."/>
        </authorList>
    </citation>
    <scope>NUCLEOTIDE SEQUENCE [LARGE SCALE GENOMIC DNA]</scope>
</reference>
<reference key="4">
    <citation type="journal article" date="2004" name="Genome Res.">
        <title>The status, quality, and expansion of the NIH full-length cDNA project: the Mammalian Gene Collection (MGC).</title>
        <authorList>
            <consortium name="The MGC Project Team"/>
        </authorList>
    </citation>
    <scope>NUCLEOTIDE SEQUENCE [LARGE SCALE MRNA] (ISOFORM 2)</scope>
    <source>
        <tissue>Uterus</tissue>
    </source>
</reference>
<reference key="5">
    <citation type="journal article" date="1999" name="Int. J. Cancer">
        <title>Antigens recognized by autologous antibody in patients with renal-cell carcinoma.</title>
        <authorList>
            <person name="Scanlan M.J."/>
            <person name="Gordan J.D."/>
            <person name="Williamson B."/>
            <person name="Stockert E."/>
            <person name="Bander N.H."/>
            <person name="Jongeneel C.V."/>
            <person name="Gure A.O."/>
            <person name="Jaeger D."/>
            <person name="Jaeger E."/>
            <person name="Knuth A."/>
            <person name="Chen Y.-T."/>
            <person name="Old L.J."/>
        </authorList>
    </citation>
    <scope>NUCLEOTIDE SEQUENCE [MRNA] OF 536-1363 (ISOFORM 1)</scope>
    <scope>IDENTIFICATION AS A RENAL CANCER ANTIGEN</scope>
</reference>
<reference key="6">
    <citation type="journal article" date="2006" name="Cell">
        <title>Global, in vivo, and site-specific phosphorylation dynamics in signaling networks.</title>
        <authorList>
            <person name="Olsen J.V."/>
            <person name="Blagoev B."/>
            <person name="Gnad F."/>
            <person name="Macek B."/>
            <person name="Kumar C."/>
            <person name="Mortensen P."/>
            <person name="Mann M."/>
        </authorList>
    </citation>
    <scope>IDENTIFICATION BY MASS SPECTROMETRY [LARGE SCALE ANALYSIS]</scope>
    <source>
        <tissue>Cervix carcinoma</tissue>
    </source>
</reference>
<reference key="7">
    <citation type="journal article" date="2007" name="PLoS Comput. Biol.">
        <title>Towards complete sets of farnesylated and geranylgeranylated proteins.</title>
        <authorList>
            <person name="Maurer-Stroh S."/>
            <person name="Koranda M."/>
            <person name="Benetka W."/>
            <person name="Schneider G."/>
            <person name="Sirota F.L."/>
            <person name="Eisenhaber F."/>
        </authorList>
    </citation>
    <scope>ISOPRENYLATION AT CYS-1601</scope>
</reference>
<reference key="8">
    <citation type="journal article" date="2008" name="Proc. Natl. Acad. Sci. U.S.A.">
        <title>A quantitative atlas of mitotic phosphorylation.</title>
        <authorList>
            <person name="Dephoure N."/>
            <person name="Zhou C."/>
            <person name="Villen J."/>
            <person name="Beausoleil S.A."/>
            <person name="Bakalarski C.E."/>
            <person name="Elledge S.J."/>
            <person name="Gygi S.P."/>
        </authorList>
    </citation>
    <scope>PHOSPHORYLATION [LARGE SCALE ANALYSIS] AT TYR-1173</scope>
    <scope>IDENTIFICATION BY MASS SPECTROMETRY [LARGE SCALE ANALYSIS]</scope>
    <source>
        <tissue>Cervix carcinoma</tissue>
    </source>
</reference>
<reference key="9">
    <citation type="journal article" date="2009" name="Sci. Signal.">
        <title>Quantitative phosphoproteomic analysis of T cell receptor signaling reveals system-wide modulation of protein-protein interactions.</title>
        <authorList>
            <person name="Mayya V."/>
            <person name="Lundgren D.H."/>
            <person name="Hwang S.-I."/>
            <person name="Rezaul K."/>
            <person name="Wu L."/>
            <person name="Eng J.K."/>
            <person name="Rodionov V."/>
            <person name="Han D.K."/>
        </authorList>
    </citation>
    <scope>PHOSPHORYLATION [LARGE SCALE ANALYSIS] AT SER-1372</scope>
    <scope>IDENTIFICATION BY MASS SPECTROMETRY [LARGE SCALE ANALYSIS]</scope>
    <source>
        <tissue>Leukemic T-cell</tissue>
    </source>
</reference>
<reference key="10">
    <citation type="journal article" date="2010" name="Mamm. Genome">
        <title>USP32 is an active, membrane-bound ubiquitin protease overexpressed in breast cancers.</title>
        <authorList>
            <person name="Akhavantabasi S."/>
            <person name="Akman H.B."/>
            <person name="Sapmaz A."/>
            <person name="Keller J."/>
            <person name="Petty E.M."/>
            <person name="Erson A.E."/>
        </authorList>
    </citation>
    <scope>CATALYTIC ACTIVITY</scope>
    <scope>SUBCELLULAR LOCATION</scope>
</reference>
<reference key="11">
    <citation type="journal article" date="2011" name="Sci. Signal.">
        <title>System-wide temporal characterization of the proteome and phosphoproteome of human embryonic stem cell differentiation.</title>
        <authorList>
            <person name="Rigbolt K.T."/>
            <person name="Prokhorova T.A."/>
            <person name="Akimov V."/>
            <person name="Henningsen J."/>
            <person name="Johansen P.T."/>
            <person name="Kratchmarova I."/>
            <person name="Kassem M."/>
            <person name="Mann M."/>
            <person name="Olsen J.V."/>
            <person name="Blagoev B."/>
        </authorList>
    </citation>
    <scope>PHOSPHORYLATION [LARGE SCALE ANALYSIS] AT SER-1372</scope>
    <scope>IDENTIFICATION BY MASS SPECTROMETRY [LARGE SCALE ANALYSIS]</scope>
</reference>
<reference key="12">
    <citation type="journal article" date="2013" name="J. Proteome Res.">
        <title>Toward a comprehensive characterization of a human cancer cell phosphoproteome.</title>
        <authorList>
            <person name="Zhou H."/>
            <person name="Di Palma S."/>
            <person name="Preisinger C."/>
            <person name="Peng M."/>
            <person name="Polat A.N."/>
            <person name="Heck A.J."/>
            <person name="Mohammed S."/>
        </authorList>
    </citation>
    <scope>PHOSPHORYLATION [LARGE SCALE ANALYSIS] AT SER-1350; SER-1372; SER-1376 AND SER-1588</scope>
    <scope>IDENTIFICATION BY MASS SPECTROMETRY [LARGE SCALE ANALYSIS]</scope>
    <source>
        <tissue>Cervix carcinoma</tissue>
        <tissue>Erythroleukemia</tissue>
    </source>
</reference>
<reference key="13">
    <citation type="journal article" date="2014" name="J. Proteomics">
        <title>An enzyme assisted RP-RPLC approach for in-depth analysis of human liver phosphoproteome.</title>
        <authorList>
            <person name="Bian Y."/>
            <person name="Song C."/>
            <person name="Cheng K."/>
            <person name="Dong M."/>
            <person name="Wang F."/>
            <person name="Huang J."/>
            <person name="Sun D."/>
            <person name="Wang L."/>
            <person name="Ye M."/>
            <person name="Zou H."/>
        </authorList>
    </citation>
    <scope>PHOSPHORYLATION [LARGE SCALE ANALYSIS] AT SER-1454</scope>
    <scope>IDENTIFICATION BY MASS SPECTROMETRY [LARGE SCALE ANALYSIS]</scope>
    <source>
        <tissue>Liver</tissue>
    </source>
</reference>
<reference key="14">
    <citation type="journal article" date="2022" name="Cell Rep.">
        <title>USP32-regulated LAMTOR1 ubiquitination impacts mTORC1 activation and autophagy induction.</title>
        <authorList>
            <person name="Hertel A."/>
            <person name="Alves L.M."/>
            <person name="Dutz H."/>
            <person name="Tascher G."/>
            <person name="Bonn F."/>
            <person name="Kaulich M."/>
            <person name="Dikic I."/>
            <person name="Eimer S."/>
            <person name="Steinberg F."/>
            <person name="Bremm A."/>
        </authorList>
    </citation>
    <scope>FUNCTION</scope>
    <scope>CATALYTIC ACTIVITY</scope>
    <scope>SUBCELLULAR LOCATION</scope>
</reference>
<feature type="chain" id="PRO_0000080663" description="Ubiquitin carboxyl-terminal hydrolase 32">
    <location>
        <begin position="1"/>
        <end position="1601"/>
    </location>
</feature>
<feature type="propeptide" id="PRO_0000396658" description="Removed in mature form" evidence="1">
    <location>
        <begin position="1602"/>
        <end position="1604"/>
    </location>
</feature>
<feature type="domain" description="EF-hand 1" evidence="2">
    <location>
        <begin position="91"/>
        <end position="126"/>
    </location>
</feature>
<feature type="domain" description="EF-hand 2" evidence="2">
    <location>
        <begin position="228"/>
        <end position="263"/>
    </location>
</feature>
<feature type="domain" description="EF-hand 3" evidence="2">
    <location>
        <begin position="264"/>
        <end position="299"/>
    </location>
</feature>
<feature type="domain" description="DUSP" evidence="3">
    <location>
        <begin position="369"/>
        <end position="585"/>
    </location>
</feature>
<feature type="domain" description="USP">
    <location>
        <begin position="734"/>
        <end position="1567"/>
    </location>
</feature>
<feature type="region of interest" description="Disordered" evidence="6">
    <location>
        <begin position="1343"/>
        <end position="1362"/>
    </location>
</feature>
<feature type="region of interest" description="Disordered" evidence="6">
    <location>
        <begin position="1367"/>
        <end position="1431"/>
    </location>
</feature>
<feature type="compositionally biased region" description="Low complexity" evidence="6">
    <location>
        <begin position="1367"/>
        <end position="1399"/>
    </location>
</feature>
<feature type="active site" description="Nucleophile" evidence="4 5">
    <location>
        <position position="743"/>
    </location>
</feature>
<feature type="active site" description="Proton acceptor" evidence="4 5">
    <location>
        <position position="1526"/>
    </location>
</feature>
<feature type="binding site" evidence="2">
    <location>
        <position position="241"/>
    </location>
    <ligand>
        <name>Ca(2+)</name>
        <dbReference type="ChEBI" id="CHEBI:29108"/>
        <label>1</label>
    </ligand>
</feature>
<feature type="binding site" evidence="2">
    <location>
        <position position="243"/>
    </location>
    <ligand>
        <name>Ca(2+)</name>
        <dbReference type="ChEBI" id="CHEBI:29108"/>
        <label>1</label>
    </ligand>
</feature>
<feature type="binding site" evidence="2">
    <location>
        <position position="245"/>
    </location>
    <ligand>
        <name>Ca(2+)</name>
        <dbReference type="ChEBI" id="CHEBI:29108"/>
        <label>1</label>
    </ligand>
</feature>
<feature type="binding site" evidence="2">
    <location>
        <position position="247"/>
    </location>
    <ligand>
        <name>Ca(2+)</name>
        <dbReference type="ChEBI" id="CHEBI:29108"/>
        <label>1</label>
    </ligand>
</feature>
<feature type="binding site" evidence="2">
    <location>
        <position position="252"/>
    </location>
    <ligand>
        <name>Ca(2+)</name>
        <dbReference type="ChEBI" id="CHEBI:29108"/>
        <label>1</label>
    </ligand>
</feature>
<feature type="binding site" evidence="2">
    <location>
        <position position="277"/>
    </location>
    <ligand>
        <name>Ca(2+)</name>
        <dbReference type="ChEBI" id="CHEBI:29108"/>
        <label>2</label>
    </ligand>
</feature>
<feature type="binding site" evidence="2">
    <location>
        <position position="279"/>
    </location>
    <ligand>
        <name>Ca(2+)</name>
        <dbReference type="ChEBI" id="CHEBI:29108"/>
        <label>2</label>
    </ligand>
</feature>
<feature type="binding site" evidence="2">
    <location>
        <position position="281"/>
    </location>
    <ligand>
        <name>Ca(2+)</name>
        <dbReference type="ChEBI" id="CHEBI:29108"/>
        <label>2</label>
    </ligand>
</feature>
<feature type="binding site" evidence="2">
    <location>
        <position position="288"/>
    </location>
    <ligand>
        <name>Ca(2+)</name>
        <dbReference type="ChEBI" id="CHEBI:29108"/>
        <label>2</label>
    </ligand>
</feature>
<feature type="modified residue" description="Phosphotyrosine" evidence="11">
    <location>
        <position position="1173"/>
    </location>
</feature>
<feature type="modified residue" description="Phosphoserine" evidence="14">
    <location>
        <position position="1350"/>
    </location>
</feature>
<feature type="modified residue" description="Phosphoserine" evidence="12 13 14">
    <location>
        <position position="1372"/>
    </location>
</feature>
<feature type="modified residue" description="Phosphoserine" evidence="14">
    <location>
        <position position="1376"/>
    </location>
</feature>
<feature type="modified residue" description="Phosphoserine" evidence="15">
    <location>
        <position position="1454"/>
    </location>
</feature>
<feature type="modified residue" description="Phosphoserine" evidence="14">
    <location>
        <position position="1588"/>
    </location>
</feature>
<feature type="modified residue" description="Cysteine methyl ester" evidence="1">
    <location>
        <position position="1601"/>
    </location>
</feature>
<feature type="lipid moiety-binding region" description="S-farnesyl cysteine" evidence="1">
    <location>
        <position position="1601"/>
    </location>
</feature>
<feature type="splice variant" id="VSP_056307" description="In isoform 2." evidence="9">
    <original>GWLERESRYGL</original>
    <variation>TLETDQIYTRN</variation>
    <location>
        <begin position="380"/>
        <end position="390"/>
    </location>
</feature>
<feature type="splice variant" id="VSP_056308" description="In isoform 2." evidence="9">
    <location>
        <begin position="391"/>
        <end position="1604"/>
    </location>
</feature>
<feature type="sequence variant" id="VAR_051536" description="In dbSNP:rs7208980.">
    <original>H</original>
    <variation>Y</variation>
    <location>
        <position position="76"/>
    </location>
</feature>
<feature type="sequence variant" id="VAR_051537" description="In dbSNP:rs3207630.">
    <original>A</original>
    <variation>G</variation>
    <location>
        <position position="1469"/>
    </location>
</feature>
<feature type="sequence variant" id="VAR_051538" description="In dbSNP:rs1053621.">
    <original>G</original>
    <variation>R</variation>
    <location>
        <position position="1568"/>
    </location>
</feature>
<feature type="sequence variant" id="VAR_051539" description="In dbSNP:rs1053625.">
    <original>T</original>
    <variation>I</variation>
    <location>
        <position position="1578"/>
    </location>
</feature>
<feature type="sequence conflict" description="In Ref. 2; AAK30207." evidence="10" ref="2">
    <original>H</original>
    <variation>R</variation>
    <location>
        <position position="884"/>
    </location>
</feature>
<feature type="sequence conflict" description="In Ref. 2; AAK30207." evidence="10" ref="2">
    <original>C</original>
    <variation>S</variation>
    <location>
        <position position="1167"/>
    </location>
</feature>
<evidence type="ECO:0000255" key="1"/>
<evidence type="ECO:0000255" key="2">
    <source>
        <dbReference type="PROSITE-ProRule" id="PRU00448"/>
    </source>
</evidence>
<evidence type="ECO:0000255" key="3">
    <source>
        <dbReference type="PROSITE-ProRule" id="PRU00613"/>
    </source>
</evidence>
<evidence type="ECO:0000255" key="4">
    <source>
        <dbReference type="PROSITE-ProRule" id="PRU10092"/>
    </source>
</evidence>
<evidence type="ECO:0000255" key="5">
    <source>
        <dbReference type="PROSITE-ProRule" id="PRU10093"/>
    </source>
</evidence>
<evidence type="ECO:0000256" key="6">
    <source>
        <dbReference type="SAM" id="MobiDB-lite"/>
    </source>
</evidence>
<evidence type="ECO:0000269" key="7">
    <source>
    </source>
</evidence>
<evidence type="ECO:0000269" key="8">
    <source>
    </source>
</evidence>
<evidence type="ECO:0000303" key="9">
    <source>
    </source>
</evidence>
<evidence type="ECO:0000305" key="10"/>
<evidence type="ECO:0007744" key="11">
    <source>
    </source>
</evidence>
<evidence type="ECO:0007744" key="12">
    <source>
    </source>
</evidence>
<evidence type="ECO:0007744" key="13">
    <source>
    </source>
</evidence>
<evidence type="ECO:0007744" key="14">
    <source>
    </source>
</evidence>
<evidence type="ECO:0007744" key="15">
    <source>
    </source>
</evidence>
<organism>
    <name type="scientific">Homo sapiens</name>
    <name type="common">Human</name>
    <dbReference type="NCBI Taxonomy" id="9606"/>
    <lineage>
        <taxon>Eukaryota</taxon>
        <taxon>Metazoa</taxon>
        <taxon>Chordata</taxon>
        <taxon>Craniata</taxon>
        <taxon>Vertebrata</taxon>
        <taxon>Euteleostomi</taxon>
        <taxon>Mammalia</taxon>
        <taxon>Eutheria</taxon>
        <taxon>Euarchontoglires</taxon>
        <taxon>Primates</taxon>
        <taxon>Haplorrhini</taxon>
        <taxon>Catarrhini</taxon>
        <taxon>Hominidae</taxon>
        <taxon>Homo</taxon>
    </lineage>
</organism>